<reference key="1">
    <citation type="journal article" date="2007" name="Genome Biol.">
        <title>Characterization and modeling of the Haemophilus influenzae core and supragenomes based on the complete genomic sequences of Rd and 12 clinical nontypeable strains.</title>
        <authorList>
            <person name="Hogg J.S."/>
            <person name="Hu F.Z."/>
            <person name="Janto B."/>
            <person name="Boissy R."/>
            <person name="Hayes J."/>
            <person name="Keefe R."/>
            <person name="Post J.C."/>
            <person name="Ehrlich G.D."/>
        </authorList>
    </citation>
    <scope>NUCLEOTIDE SEQUENCE [LARGE SCALE GENOMIC DNA]</scope>
    <source>
        <strain>PittEE</strain>
    </source>
</reference>
<dbReference type="EC" id="2.1.1.228" evidence="1"/>
<dbReference type="EMBL" id="CP000671">
    <property type="protein sequence ID" value="ABQ97904.1"/>
    <property type="molecule type" value="Genomic_DNA"/>
</dbReference>
<dbReference type="SMR" id="A5UAV3"/>
<dbReference type="KEGG" id="hip:CGSHiEE_02235"/>
<dbReference type="HOGENOM" id="CLU_047363_0_1_6"/>
<dbReference type="GO" id="GO:0005829">
    <property type="term" value="C:cytosol"/>
    <property type="evidence" value="ECO:0007669"/>
    <property type="project" value="TreeGrafter"/>
</dbReference>
<dbReference type="GO" id="GO:0052906">
    <property type="term" value="F:tRNA (guanine(37)-N1)-methyltransferase activity"/>
    <property type="evidence" value="ECO:0007669"/>
    <property type="project" value="UniProtKB-UniRule"/>
</dbReference>
<dbReference type="GO" id="GO:0002939">
    <property type="term" value="P:tRNA N1-guanine methylation"/>
    <property type="evidence" value="ECO:0007669"/>
    <property type="project" value="TreeGrafter"/>
</dbReference>
<dbReference type="CDD" id="cd18080">
    <property type="entry name" value="TrmD-like"/>
    <property type="match status" value="1"/>
</dbReference>
<dbReference type="FunFam" id="1.10.1270.20:FF:000001">
    <property type="entry name" value="tRNA (guanine-N(1)-)-methyltransferase"/>
    <property type="match status" value="1"/>
</dbReference>
<dbReference type="FunFam" id="3.40.1280.10:FF:000001">
    <property type="entry name" value="tRNA (guanine-N(1)-)-methyltransferase"/>
    <property type="match status" value="1"/>
</dbReference>
<dbReference type="Gene3D" id="3.40.1280.10">
    <property type="match status" value="1"/>
</dbReference>
<dbReference type="Gene3D" id="1.10.1270.20">
    <property type="entry name" value="tRNA(m1g37)methyltransferase, domain 2"/>
    <property type="match status" value="1"/>
</dbReference>
<dbReference type="HAMAP" id="MF_00605">
    <property type="entry name" value="TrmD"/>
    <property type="match status" value="1"/>
</dbReference>
<dbReference type="InterPro" id="IPR029028">
    <property type="entry name" value="Alpha/beta_knot_MTases"/>
</dbReference>
<dbReference type="InterPro" id="IPR023148">
    <property type="entry name" value="tRNA_m1G_MeTrfase_C_sf"/>
</dbReference>
<dbReference type="InterPro" id="IPR002649">
    <property type="entry name" value="tRNA_m1G_MeTrfase_TrmD"/>
</dbReference>
<dbReference type="InterPro" id="IPR029026">
    <property type="entry name" value="tRNA_m1G_MTases_N"/>
</dbReference>
<dbReference type="InterPro" id="IPR016009">
    <property type="entry name" value="tRNA_MeTrfase_TRMD/TRM10"/>
</dbReference>
<dbReference type="NCBIfam" id="NF000648">
    <property type="entry name" value="PRK00026.1"/>
    <property type="match status" value="1"/>
</dbReference>
<dbReference type="NCBIfam" id="TIGR00088">
    <property type="entry name" value="trmD"/>
    <property type="match status" value="1"/>
</dbReference>
<dbReference type="PANTHER" id="PTHR46417">
    <property type="entry name" value="TRNA (GUANINE-N(1)-)-METHYLTRANSFERASE"/>
    <property type="match status" value="1"/>
</dbReference>
<dbReference type="PANTHER" id="PTHR46417:SF1">
    <property type="entry name" value="TRNA (GUANINE-N(1)-)-METHYLTRANSFERASE"/>
    <property type="match status" value="1"/>
</dbReference>
<dbReference type="Pfam" id="PF01746">
    <property type="entry name" value="tRNA_m1G_MT"/>
    <property type="match status" value="1"/>
</dbReference>
<dbReference type="PIRSF" id="PIRSF000386">
    <property type="entry name" value="tRNA_mtase"/>
    <property type="match status" value="1"/>
</dbReference>
<dbReference type="SUPFAM" id="SSF75217">
    <property type="entry name" value="alpha/beta knot"/>
    <property type="match status" value="1"/>
</dbReference>
<comment type="function">
    <text evidence="1">Specifically methylates guanosine-37 in various tRNAs.</text>
</comment>
<comment type="catalytic activity">
    <reaction evidence="1">
        <text>guanosine(37) in tRNA + S-adenosyl-L-methionine = N(1)-methylguanosine(37) in tRNA + S-adenosyl-L-homocysteine + H(+)</text>
        <dbReference type="Rhea" id="RHEA:36899"/>
        <dbReference type="Rhea" id="RHEA-COMP:10145"/>
        <dbReference type="Rhea" id="RHEA-COMP:10147"/>
        <dbReference type="ChEBI" id="CHEBI:15378"/>
        <dbReference type="ChEBI" id="CHEBI:57856"/>
        <dbReference type="ChEBI" id="CHEBI:59789"/>
        <dbReference type="ChEBI" id="CHEBI:73542"/>
        <dbReference type="ChEBI" id="CHEBI:74269"/>
        <dbReference type="EC" id="2.1.1.228"/>
    </reaction>
</comment>
<comment type="subunit">
    <text evidence="1">Homodimer.</text>
</comment>
<comment type="subcellular location">
    <subcellularLocation>
        <location evidence="1">Cytoplasm</location>
    </subcellularLocation>
</comment>
<comment type="similarity">
    <text evidence="1">Belongs to the RNA methyltransferase TrmD family.</text>
</comment>
<feature type="chain" id="PRO_1000006481" description="tRNA (guanine-N(1)-)-methyltransferase">
    <location>
        <begin position="1"/>
        <end position="246"/>
    </location>
</feature>
<feature type="binding site" evidence="1">
    <location>
        <position position="113"/>
    </location>
    <ligand>
        <name>S-adenosyl-L-methionine</name>
        <dbReference type="ChEBI" id="CHEBI:59789"/>
    </ligand>
</feature>
<feature type="binding site" evidence="1">
    <location>
        <begin position="133"/>
        <end position="138"/>
    </location>
    <ligand>
        <name>S-adenosyl-L-methionine</name>
        <dbReference type="ChEBI" id="CHEBI:59789"/>
    </ligand>
</feature>
<sequence>MWIGVISLFPEMFKAITEFGVTGRAVKHNLLKVECWNPRNFTFDKHKTVDDRPYGGGPGMLMMVQPLRDAIHTAKAAAGEGAKVIYLSPQGRKLDQGGVTELAQNQKLILVCGRYEGIDERLIQTEIDEEWSIGDYVLTGGELPAMTLIDAVARFIPGVLGKQASAEEDSFADGLLDCPHYTRPEVLEGLTVPPVLMSGHHEEIRKWRLKQSLQRTWLRRPELLEGLALTDEQRKLLKEAQAEHNS</sequence>
<organism>
    <name type="scientific">Haemophilus influenzae (strain PittEE)</name>
    <dbReference type="NCBI Taxonomy" id="374930"/>
    <lineage>
        <taxon>Bacteria</taxon>
        <taxon>Pseudomonadati</taxon>
        <taxon>Pseudomonadota</taxon>
        <taxon>Gammaproteobacteria</taxon>
        <taxon>Pasteurellales</taxon>
        <taxon>Pasteurellaceae</taxon>
        <taxon>Haemophilus</taxon>
    </lineage>
</organism>
<evidence type="ECO:0000255" key="1">
    <source>
        <dbReference type="HAMAP-Rule" id="MF_00605"/>
    </source>
</evidence>
<protein>
    <recommendedName>
        <fullName evidence="1">tRNA (guanine-N(1)-)-methyltransferase</fullName>
        <ecNumber evidence="1">2.1.1.228</ecNumber>
    </recommendedName>
    <alternativeName>
        <fullName evidence="1">M1G-methyltransferase</fullName>
    </alternativeName>
    <alternativeName>
        <fullName evidence="1">tRNA [GM37] methyltransferase</fullName>
    </alternativeName>
</protein>
<name>TRMD_HAEIE</name>
<keyword id="KW-0963">Cytoplasm</keyword>
<keyword id="KW-0489">Methyltransferase</keyword>
<keyword id="KW-0949">S-adenosyl-L-methionine</keyword>
<keyword id="KW-0808">Transferase</keyword>
<keyword id="KW-0819">tRNA processing</keyword>
<accession>A5UAV3</accession>
<gene>
    <name evidence="1" type="primary">trmD</name>
    <name type="ordered locus">CGSHiEE_02235</name>
</gene>
<proteinExistence type="inferred from homology"/>